<feature type="chain" id="PRO_0000262943" description="Ribulose bisphosphate carboxylase small subunit">
    <location>
        <begin position="1"/>
        <end position="10" status="greater than"/>
    </location>
</feature>
<feature type="non-terminal residue">
    <location>
        <position position="10"/>
    </location>
</feature>
<gene>
    <name evidence="1" type="primary">cbbS</name>
    <name evidence="1" type="synonym">rbcS</name>
</gene>
<comment type="function">
    <text evidence="1">RuBisCO catalyzes two reactions: the carboxylation of D-ribulose 1,5-bisphosphate, the primary event in carbon dioxide fixation, as well as the oxidative fragmentation of the pentose substrate in the photorespiration process. Both reactions occur simultaneously and in competition at the same active site. Although the small subunit is not catalytic it is essential for maximal activity.</text>
</comment>
<comment type="subunit">
    <text evidence="1">Heterohexadecamer of 8 large and 8 small subunits.</text>
</comment>
<comment type="subcellular location">
    <subcellularLocation>
        <location evidence="1">Carboxysome</location>
    </subcellularLocation>
</comment>
<comment type="miscellaneous">
    <text evidence="1">The basic functional RuBisCO is composed of a large chain homodimer in a 'head-to-tail' conformation. In form I RuBisCO this homodimer is arranged in a barrel-like tetramer with the small subunits forming a tetrameric 'cap' on each end of the 'barrel'.</text>
</comment>
<comment type="similarity">
    <text evidence="1">Belongs to the RuBisCO small chain family.</text>
</comment>
<evidence type="ECO:0000255" key="1">
    <source>
        <dbReference type="HAMAP-Rule" id="MF_00859"/>
    </source>
</evidence>
<evidence type="ECO:0000305" key="2"/>
<protein>
    <recommendedName>
        <fullName evidence="1">Ribulose bisphosphate carboxylase small subunit</fullName>
        <shortName evidence="1">RuBisCO small subunit</shortName>
    </recommendedName>
</protein>
<reference evidence="2" key="1">
    <citation type="submission" date="2001-10" db="UniProtKB">
        <authorList>
            <person name="Apte S.K."/>
            <person name="Uhlemann E."/>
            <person name="Schmid R."/>
            <person name="Altendorf K."/>
        </authorList>
    </citation>
    <scope>PROTEIN SEQUENCE</scope>
</reference>
<organism>
    <name type="scientific">Anabaena sp. (strain L31)</name>
    <dbReference type="NCBI Taxonomy" id="29412"/>
    <lineage>
        <taxon>Bacteria</taxon>
        <taxon>Bacillati</taxon>
        <taxon>Cyanobacteriota</taxon>
        <taxon>Cyanophyceae</taxon>
        <taxon>Nostocales</taxon>
        <taxon>Nostocaceae</taxon>
        <taxon>Anabaena</taxon>
    </lineage>
</organism>
<dbReference type="GO" id="GO:0031470">
    <property type="term" value="C:carboxysome"/>
    <property type="evidence" value="ECO:0007669"/>
    <property type="project" value="UniProtKB-SubCell"/>
</dbReference>
<dbReference type="GO" id="GO:0009853">
    <property type="term" value="P:photorespiration"/>
    <property type="evidence" value="ECO:0007669"/>
    <property type="project" value="UniProtKB-KW"/>
</dbReference>
<dbReference type="GO" id="GO:0019253">
    <property type="term" value="P:reductive pentose-phosphate cycle"/>
    <property type="evidence" value="ECO:0007669"/>
    <property type="project" value="UniProtKB-KW"/>
</dbReference>
<proteinExistence type="evidence at protein level"/>
<sequence length="10" mass="1322">MQTLPKERRY</sequence>
<name>RBS_ANASL</name>
<keyword id="KW-1283">Bacterial microcompartment</keyword>
<keyword id="KW-0113">Calvin cycle</keyword>
<keyword id="KW-0120">Carbon dioxide fixation</keyword>
<keyword id="KW-1282">Carboxysome</keyword>
<keyword id="KW-0903">Direct protein sequencing</keyword>
<keyword id="KW-0601">Photorespiration</keyword>
<keyword id="KW-0602">Photosynthesis</keyword>
<accession>P83160</accession>